<name>AQP1_PLABA</name>
<comment type="function">
    <text evidence="5 6">Mediates water and glycerol transport across the cell membrane (PubMed:17284593, PubMed:29330527). Permeable to urea (PubMed:17284593). Required for efficient progression of parasites through the liver stages (PubMed:29330527).</text>
</comment>
<comment type="catalytic activity">
    <reaction evidence="5">
        <text>H2O(in) = H2O(out)</text>
        <dbReference type="Rhea" id="RHEA:29667"/>
        <dbReference type="ChEBI" id="CHEBI:15377"/>
    </reaction>
</comment>
<comment type="catalytic activity">
    <reaction evidence="5 6">
        <text>glycerol(in) = glycerol(out)</text>
        <dbReference type="Rhea" id="RHEA:29675"/>
        <dbReference type="ChEBI" id="CHEBI:17754"/>
    </reaction>
</comment>
<comment type="catalytic activity">
    <reaction evidence="5">
        <text>urea(in) = urea(out)</text>
        <dbReference type="Rhea" id="RHEA:32799"/>
        <dbReference type="ChEBI" id="CHEBI:16199"/>
    </reaction>
</comment>
<comment type="subcellular location">
    <subcellularLocation>
        <location evidence="5 6">Cell membrane</location>
        <topology evidence="3">Multi-pass membrane protein</topology>
    </subcellularLocation>
</comment>
<comment type="developmental stage">
    <text evidence="5 6">Expressed in blood stages (at protein level) (PubMed:17284593). Lower-level expression in liver stages (at protein level); transcription increases during parasite schizogony in hepatocytes (PubMed:29330527).</text>
</comment>
<comment type="domain">
    <text evidence="1 7">Aquaporins contain two tandem repeats each containing three membrane-spanning domains and a pore-forming loop (By similarity). The two canonical Asn-Pro-Ala (NPA) motifs in the pore region, which are highly conserved in aquaporin water channels, are changed to Asn-Leu-Ala (NLA) and Asn-Pro-Ser (NPS), respectively (PubMed:17284593).</text>
</comment>
<comment type="disruption phenotype">
    <text evidence="5 6">No significant effects on parasite viability and morphology in culture (PubMed:17284593). Deficiency in glycerol uptake in blood and liver stage parasites (PubMed:17284593, PubMed:29330527). Reduced incorporation of glycerol into phosphatidylcholine and reduced levels of phosphatidylcholine in liver-stage parasites (PubMed:29330527). Slower parasite proliferation in mice that results in prolonged survival of infected animals (PubMed:17284593, PubMed:29330527). Slower replication of parasites in mouse liver with no significant effect on the invasion process (PubMed:29330527). Formation of smaller merosomes that contain less merozoites and appear later during infection (PubMed:29330527). Abnormal morphological features in merozoites (PubMed:29330527). Reduced ability of hepatocyte-derived merozoites to invade red blood cells (PubMed:29330527).</text>
</comment>
<comment type="similarity">
    <text evidence="4">Belongs to the MIP/aquaporin (TC 1.A.8) family.</text>
</comment>
<sequence length="258" mass="28141">MKVTFGNEYIKNFLGEFIGTFVLMFLGEGTTANHFAVPIKNDWLRLCIGWGLGVFFGILISAKLSGAHLNLAVTVGLSTIKKFNYKQIPLYFAGQLLGALSATASVYGLYYGFVSDQTIPKFSWETGKHANVHIASAFMHEFILTGILLLIILSVTDENICGKFHVLKVSSIVGLAIICIGISFGGNTGFALNPSRDLGARILSAIAYGFEAFTRDKCYFWIPLIAPIIGSIIFCQIYDKIVAPLVVISEHDKGALEI</sequence>
<dbReference type="EMBL" id="LK023124">
    <property type="protein sequence ID" value="VUC55697.1"/>
    <property type="molecule type" value="Genomic_DNA"/>
</dbReference>
<dbReference type="RefSeq" id="XP_675187.1">
    <property type="nucleotide sequence ID" value="XM_670095.1"/>
</dbReference>
<dbReference type="RefSeq" id="XP_676524.1">
    <property type="nucleotide sequence ID" value="XM_671432.1"/>
</dbReference>
<dbReference type="SMR" id="A0A509APT1"/>
<dbReference type="STRING" id="5823.A0A509APT1"/>
<dbReference type="VEuPathDB" id="PlasmoDB:PBANKA_0915600"/>
<dbReference type="InParanoid" id="A0A509APT1"/>
<dbReference type="OMA" id="WGFAVLT"/>
<dbReference type="Proteomes" id="UP000074855">
    <property type="component" value="Chromosome 9"/>
</dbReference>
<dbReference type="GO" id="GO:0005886">
    <property type="term" value="C:plasma membrane"/>
    <property type="evidence" value="ECO:0000314"/>
    <property type="project" value="UniProtKB"/>
</dbReference>
<dbReference type="GO" id="GO:0015254">
    <property type="term" value="F:glycerol channel activity"/>
    <property type="evidence" value="ECO:0000314"/>
    <property type="project" value="UniProtKB"/>
</dbReference>
<dbReference type="GO" id="GO:0015204">
    <property type="term" value="F:urea transmembrane transporter activity"/>
    <property type="evidence" value="ECO:0000314"/>
    <property type="project" value="UniProtKB"/>
</dbReference>
<dbReference type="GO" id="GO:0015250">
    <property type="term" value="F:water channel activity"/>
    <property type="evidence" value="ECO:0000314"/>
    <property type="project" value="UniProtKB"/>
</dbReference>
<dbReference type="GO" id="GO:0044002">
    <property type="term" value="P:acquisition of nutrients from host"/>
    <property type="evidence" value="ECO:0000315"/>
    <property type="project" value="UniProtKB"/>
</dbReference>
<dbReference type="GO" id="GO:0015793">
    <property type="term" value="P:glycerol transmembrane transport"/>
    <property type="evidence" value="ECO:0000314"/>
    <property type="project" value="UniProtKB"/>
</dbReference>
<dbReference type="GO" id="GO:0071918">
    <property type="term" value="P:urea transmembrane transport"/>
    <property type="evidence" value="ECO:0000314"/>
    <property type="project" value="UniProtKB"/>
</dbReference>
<dbReference type="GO" id="GO:0006833">
    <property type="term" value="P:water transport"/>
    <property type="evidence" value="ECO:0000314"/>
    <property type="project" value="UniProtKB"/>
</dbReference>
<dbReference type="Gene3D" id="1.20.1080.10">
    <property type="entry name" value="Glycerol uptake facilitator protein"/>
    <property type="match status" value="1"/>
</dbReference>
<dbReference type="InterPro" id="IPR023271">
    <property type="entry name" value="Aquaporin-like"/>
</dbReference>
<dbReference type="InterPro" id="IPR000425">
    <property type="entry name" value="MIP"/>
</dbReference>
<dbReference type="InterPro" id="IPR050363">
    <property type="entry name" value="MIP/Aquaporin"/>
</dbReference>
<dbReference type="PANTHER" id="PTHR43829">
    <property type="entry name" value="AQUAPORIN OR AQUAGLYCEROPORIN RELATED"/>
    <property type="match status" value="1"/>
</dbReference>
<dbReference type="PANTHER" id="PTHR43829:SF9">
    <property type="entry name" value="AQUAPORIN-9"/>
    <property type="match status" value="1"/>
</dbReference>
<dbReference type="Pfam" id="PF00230">
    <property type="entry name" value="MIP"/>
    <property type="match status" value="1"/>
</dbReference>
<dbReference type="PRINTS" id="PR00783">
    <property type="entry name" value="MINTRINSICP"/>
</dbReference>
<dbReference type="SUPFAM" id="SSF81338">
    <property type="entry name" value="Aquaporin-like"/>
    <property type="match status" value="1"/>
</dbReference>
<protein>
    <recommendedName>
        <fullName evidence="8">Aquaglyceroporin</fullName>
        <shortName evidence="7 8">PbAQP</shortName>
    </recommendedName>
    <alternativeName>
        <fullName evidence="9">Aquaporin-1</fullName>
    </alternativeName>
</protein>
<organism evidence="11">
    <name type="scientific">Plasmodium berghei (strain Anka)</name>
    <dbReference type="NCBI Taxonomy" id="5823"/>
    <lineage>
        <taxon>Eukaryota</taxon>
        <taxon>Sar</taxon>
        <taxon>Alveolata</taxon>
        <taxon>Apicomplexa</taxon>
        <taxon>Aconoidasida</taxon>
        <taxon>Haemosporida</taxon>
        <taxon>Plasmodiidae</taxon>
        <taxon>Plasmodium</taxon>
        <taxon>Plasmodium (Vinckeia)</taxon>
    </lineage>
</organism>
<reference evidence="11" key="1">
    <citation type="journal article" date="2014" name="BMC Biol.">
        <title>A comprehensive evaluation of rodent malaria parasite genomes and gene expression.</title>
        <authorList>
            <person name="Otto T.D."/>
            <person name="Bohme U."/>
            <person name="Jackson A.P."/>
            <person name="Hunt M."/>
            <person name="Franke-Fayard B."/>
            <person name="Hoeijmakers W.A."/>
            <person name="Religa A.A."/>
            <person name="Robertson L."/>
            <person name="Sanders M."/>
            <person name="Ogun S.A."/>
            <person name="Cunningham D."/>
            <person name="Erhart A."/>
            <person name="Billker O."/>
            <person name="Khan S.M."/>
            <person name="Stunnenberg H.G."/>
            <person name="Langhorne J."/>
            <person name="Holder A.A."/>
            <person name="Waters A.P."/>
            <person name="Newbold C.I."/>
            <person name="Pain A."/>
            <person name="Berriman M."/>
            <person name="Janse C.J."/>
        </authorList>
    </citation>
    <scope>NUCLEOTIDE SEQUENCE [LARGE SCALE GENOMIC DNA]</scope>
    <source>
        <strain evidence="11">ANKA</strain>
    </source>
</reference>
<reference evidence="9" key="2">
    <citation type="journal article" date="2007" name="Proc. Natl. Acad. Sci. U.S.A.">
        <title>Aquaglyceroporin PbAQP during intraerythrocytic development of the malaria parasite Plasmodium berghei.</title>
        <authorList>
            <person name="Promeneur D."/>
            <person name="Liu Y."/>
            <person name="Maciel J."/>
            <person name="Agre P."/>
            <person name="King L.S."/>
            <person name="Kumar N."/>
        </authorList>
    </citation>
    <scope>FUNCTION</scope>
    <scope>TRANSPORTER ACTIVITY</scope>
    <scope>SUBCELLULAR LOCATION</scope>
    <scope>DEVELOPMENTAL STAGE</scope>
    <scope>DOMAIN</scope>
    <scope>DISRUPTION PHENOTYPE</scope>
</reference>
<reference evidence="9" key="3">
    <citation type="journal article" date="2018" name="Sci. Rep.">
        <title>Aquaglyceroporin PbAQP is required for efficient progression through the liver stage of Plasmodium infection.</title>
        <authorList>
            <person name="Promeneur D."/>
            <person name="Mlambo G."/>
            <person name="Agre P."/>
            <person name="Coppens I."/>
        </authorList>
    </citation>
    <scope>FUNCTION</scope>
    <scope>TRANSPORTER ACTIVITY</scope>
    <scope>SUBCELLULAR LOCATION</scope>
    <scope>DEVELOPMENTAL STAGE</scope>
    <scope>DISRUPTION PHENOTYPE</scope>
</reference>
<feature type="chain" id="PRO_0000460635" description="Aquaglyceroporin">
    <location>
        <begin position="1"/>
        <end position="258"/>
    </location>
</feature>
<feature type="topological domain" description="Cytoplasmic" evidence="9">
    <location>
        <begin position="1"/>
        <end position="16"/>
    </location>
</feature>
<feature type="transmembrane region" description="Helical" evidence="3">
    <location>
        <begin position="17"/>
        <end position="37"/>
    </location>
</feature>
<feature type="topological domain" description="Extracellular" evidence="9">
    <location>
        <begin position="38"/>
        <end position="45"/>
    </location>
</feature>
<feature type="transmembrane region" description="Helical" evidence="3">
    <location>
        <begin position="46"/>
        <end position="66"/>
    </location>
</feature>
<feature type="topological domain" description="Cytoplasmic" evidence="9">
    <location>
        <begin position="67"/>
        <end position="87"/>
    </location>
</feature>
<feature type="transmembrane region" description="Helical" evidence="3">
    <location>
        <begin position="88"/>
        <end position="108"/>
    </location>
</feature>
<feature type="topological domain" description="Extracellular" evidence="9">
    <location>
        <begin position="109"/>
        <end position="133"/>
    </location>
</feature>
<feature type="transmembrane region" description="Helical" evidence="3">
    <location>
        <begin position="134"/>
        <end position="154"/>
    </location>
</feature>
<feature type="topological domain" description="Cytoplasmic" evidence="9">
    <location>
        <begin position="155"/>
        <end position="171"/>
    </location>
</feature>
<feature type="transmembrane region" description="Helical" evidence="3">
    <location>
        <begin position="172"/>
        <end position="192"/>
    </location>
</feature>
<feature type="topological domain" description="Extracellular" evidence="9">
    <location>
        <begin position="193"/>
        <end position="217"/>
    </location>
</feature>
<feature type="transmembrane region" description="Helical" evidence="3">
    <location>
        <begin position="218"/>
        <end position="238"/>
    </location>
</feature>
<feature type="topological domain" description="Cytoplasmic" evidence="9">
    <location>
        <begin position="239"/>
        <end position="258"/>
    </location>
</feature>
<feature type="binding site" evidence="2">
    <location>
        <position position="67"/>
    </location>
    <ligand>
        <name>glycerol</name>
        <dbReference type="ChEBI" id="CHEBI:17754"/>
    </ligand>
</feature>
<feature type="binding site" evidence="2">
    <location>
        <position position="70"/>
    </location>
    <ligand>
        <name>glycerol</name>
        <dbReference type="ChEBI" id="CHEBI:17754"/>
    </ligand>
</feature>
<feature type="binding site" evidence="2">
    <location>
        <position position="189"/>
    </location>
    <ligand>
        <name>glycerol</name>
        <dbReference type="ChEBI" id="CHEBI:17754"/>
    </ligand>
</feature>
<feature type="binding site" evidence="2">
    <location>
        <position position="190"/>
    </location>
    <ligand>
        <name>glycerol</name>
        <dbReference type="ChEBI" id="CHEBI:17754"/>
    </ligand>
</feature>
<feature type="binding site" evidence="2">
    <location>
        <position position="193"/>
    </location>
    <ligand>
        <name>glycerol</name>
        <dbReference type="ChEBI" id="CHEBI:17754"/>
    </ligand>
</feature>
<feature type="binding site" evidence="2">
    <location>
        <position position="196"/>
    </location>
    <ligand>
        <name>glycerol</name>
        <dbReference type="ChEBI" id="CHEBI:17754"/>
    </ligand>
</feature>
<accession>A0A509APT1</accession>
<evidence type="ECO:0000250" key="1">
    <source>
        <dbReference type="UniProtKB" id="P55087"/>
    </source>
</evidence>
<evidence type="ECO:0000250" key="2">
    <source>
        <dbReference type="UniProtKB" id="Q8II36"/>
    </source>
</evidence>
<evidence type="ECO:0000255" key="3"/>
<evidence type="ECO:0000255" key="4">
    <source>
        <dbReference type="RuleBase" id="RU000477"/>
    </source>
</evidence>
<evidence type="ECO:0000269" key="5">
    <source>
    </source>
</evidence>
<evidence type="ECO:0000269" key="6">
    <source>
    </source>
</evidence>
<evidence type="ECO:0000303" key="7">
    <source>
    </source>
</evidence>
<evidence type="ECO:0000303" key="8">
    <source>
    </source>
</evidence>
<evidence type="ECO:0000305" key="9"/>
<evidence type="ECO:0000312" key="10">
    <source>
        <dbReference type="EMBL" id="VUC55697.1"/>
    </source>
</evidence>
<evidence type="ECO:0000312" key="11">
    <source>
        <dbReference type="Proteomes" id="UP000074855"/>
    </source>
</evidence>
<keyword id="KW-1003">Cell membrane</keyword>
<keyword id="KW-0472">Membrane</keyword>
<keyword id="KW-1185">Reference proteome</keyword>
<keyword id="KW-0812">Transmembrane</keyword>
<keyword id="KW-1133">Transmembrane helix</keyword>
<keyword id="KW-0813">Transport</keyword>
<proteinExistence type="evidence at protein level"/>
<gene>
    <name evidence="8" type="primary">AQP</name>
    <name evidence="10" type="ORF">PBANKA_0915600</name>
</gene>